<feature type="chain" id="PRO_1000188227" description="Pyridoxal 5'-phosphate synthase subunit PdxS">
    <location>
        <begin position="1"/>
        <end position="302"/>
    </location>
</feature>
<feature type="region of interest" description="Disordered" evidence="2">
    <location>
        <begin position="278"/>
        <end position="302"/>
    </location>
</feature>
<feature type="active site" description="Schiff-base intermediate with D-ribose 5-phosphate" evidence="1">
    <location>
        <position position="89"/>
    </location>
</feature>
<feature type="binding site" evidence="1">
    <location>
        <position position="32"/>
    </location>
    <ligand>
        <name>D-ribose 5-phosphate</name>
        <dbReference type="ChEBI" id="CHEBI:78346"/>
    </ligand>
</feature>
<feature type="binding site" evidence="1">
    <location>
        <position position="161"/>
    </location>
    <ligand>
        <name>D-ribose 5-phosphate</name>
        <dbReference type="ChEBI" id="CHEBI:78346"/>
    </ligand>
</feature>
<feature type="binding site" evidence="1">
    <location>
        <position position="173"/>
    </location>
    <ligand>
        <name>D-glyceraldehyde 3-phosphate</name>
        <dbReference type="ChEBI" id="CHEBI:59776"/>
    </ligand>
</feature>
<feature type="binding site" evidence="1">
    <location>
        <position position="222"/>
    </location>
    <ligand>
        <name>D-ribose 5-phosphate</name>
        <dbReference type="ChEBI" id="CHEBI:78346"/>
    </ligand>
</feature>
<feature type="binding site" evidence="1">
    <location>
        <begin position="243"/>
        <end position="244"/>
    </location>
    <ligand>
        <name>D-ribose 5-phosphate</name>
        <dbReference type="ChEBI" id="CHEBI:78346"/>
    </ligand>
</feature>
<dbReference type="EC" id="4.3.3.6" evidence="1"/>
<dbReference type="EMBL" id="CP001365">
    <property type="protein sequence ID" value="ACM57800.1"/>
    <property type="molecule type" value="Genomic_DNA"/>
</dbReference>
<dbReference type="RefSeq" id="WP_015910921.1">
    <property type="nucleotide sequence ID" value="NC_012029.1"/>
</dbReference>
<dbReference type="SMR" id="B9LRS6"/>
<dbReference type="GeneID" id="7401158"/>
<dbReference type="KEGG" id="hla:Hlac_2223"/>
<dbReference type="eggNOG" id="arCOG04075">
    <property type="taxonomic scope" value="Archaea"/>
</dbReference>
<dbReference type="HOGENOM" id="CLU_055352_1_0_2"/>
<dbReference type="UniPathway" id="UPA00245"/>
<dbReference type="Proteomes" id="UP000000740">
    <property type="component" value="Chromosome 1"/>
</dbReference>
<dbReference type="GO" id="GO:0036381">
    <property type="term" value="F:pyridoxal 5'-phosphate synthase (glutamine hydrolysing) activity"/>
    <property type="evidence" value="ECO:0007669"/>
    <property type="project" value="UniProtKB-UniRule"/>
</dbReference>
<dbReference type="GO" id="GO:0006520">
    <property type="term" value="P:amino acid metabolic process"/>
    <property type="evidence" value="ECO:0007669"/>
    <property type="project" value="TreeGrafter"/>
</dbReference>
<dbReference type="GO" id="GO:0042823">
    <property type="term" value="P:pyridoxal phosphate biosynthetic process"/>
    <property type="evidence" value="ECO:0007669"/>
    <property type="project" value="UniProtKB-UniRule"/>
</dbReference>
<dbReference type="GO" id="GO:0008615">
    <property type="term" value="P:pyridoxine biosynthetic process"/>
    <property type="evidence" value="ECO:0007669"/>
    <property type="project" value="TreeGrafter"/>
</dbReference>
<dbReference type="CDD" id="cd04727">
    <property type="entry name" value="pdxS"/>
    <property type="match status" value="1"/>
</dbReference>
<dbReference type="FunFam" id="3.20.20.70:FF:000001">
    <property type="entry name" value="Pyridoxine biosynthesis protein PDX1"/>
    <property type="match status" value="1"/>
</dbReference>
<dbReference type="Gene3D" id="3.20.20.70">
    <property type="entry name" value="Aldolase class I"/>
    <property type="match status" value="1"/>
</dbReference>
<dbReference type="HAMAP" id="MF_01824">
    <property type="entry name" value="PdxS"/>
    <property type="match status" value="1"/>
</dbReference>
<dbReference type="InterPro" id="IPR013785">
    <property type="entry name" value="Aldolase_TIM"/>
</dbReference>
<dbReference type="InterPro" id="IPR001852">
    <property type="entry name" value="PdxS/SNZ"/>
</dbReference>
<dbReference type="InterPro" id="IPR033755">
    <property type="entry name" value="PdxS/SNZ_N"/>
</dbReference>
<dbReference type="InterPro" id="IPR011060">
    <property type="entry name" value="RibuloseP-bd_barrel"/>
</dbReference>
<dbReference type="NCBIfam" id="NF003215">
    <property type="entry name" value="PRK04180.1"/>
    <property type="match status" value="1"/>
</dbReference>
<dbReference type="PANTHER" id="PTHR31829">
    <property type="entry name" value="PYRIDOXAL 5'-PHOSPHATE SYNTHASE SUBUNIT SNZ1-RELATED"/>
    <property type="match status" value="1"/>
</dbReference>
<dbReference type="PANTHER" id="PTHR31829:SF0">
    <property type="entry name" value="PYRIDOXAL 5'-PHOSPHATE SYNTHASE SUBUNIT SNZ1-RELATED"/>
    <property type="match status" value="1"/>
</dbReference>
<dbReference type="Pfam" id="PF01680">
    <property type="entry name" value="SOR_SNZ"/>
    <property type="match status" value="1"/>
</dbReference>
<dbReference type="PIRSF" id="PIRSF029271">
    <property type="entry name" value="Pdx1"/>
    <property type="match status" value="1"/>
</dbReference>
<dbReference type="SUPFAM" id="SSF51366">
    <property type="entry name" value="Ribulose-phoshate binding barrel"/>
    <property type="match status" value="1"/>
</dbReference>
<dbReference type="PROSITE" id="PS01235">
    <property type="entry name" value="PDXS_SNZ_1"/>
    <property type="match status" value="1"/>
</dbReference>
<dbReference type="PROSITE" id="PS51129">
    <property type="entry name" value="PDXS_SNZ_2"/>
    <property type="match status" value="1"/>
</dbReference>
<accession>B9LRS6</accession>
<gene>
    <name evidence="1" type="primary">pdxS</name>
    <name type="ordered locus">Hlac_2223</name>
</gene>
<reference key="1">
    <citation type="journal article" date="2016" name="Stand. Genomic Sci.">
        <title>Complete genome sequence of the Antarctic Halorubrum lacusprofundi type strain ACAM 34.</title>
        <authorList>
            <person name="Anderson I.J."/>
            <person name="DasSarma P."/>
            <person name="Lucas S."/>
            <person name="Copeland A."/>
            <person name="Lapidus A."/>
            <person name="Del Rio T.G."/>
            <person name="Tice H."/>
            <person name="Dalin E."/>
            <person name="Bruce D.C."/>
            <person name="Goodwin L."/>
            <person name="Pitluck S."/>
            <person name="Sims D."/>
            <person name="Brettin T.S."/>
            <person name="Detter J.C."/>
            <person name="Han C.S."/>
            <person name="Larimer F."/>
            <person name="Hauser L."/>
            <person name="Land M."/>
            <person name="Ivanova N."/>
            <person name="Richardson P."/>
            <person name="Cavicchioli R."/>
            <person name="DasSarma S."/>
            <person name="Woese C.R."/>
            <person name="Kyrpides N.C."/>
        </authorList>
    </citation>
    <scope>NUCLEOTIDE SEQUENCE [LARGE SCALE GENOMIC DNA]</scope>
    <source>
        <strain>ATCC 49239 / DSM 5036 / JCM 8891 / ACAM 34</strain>
    </source>
</reference>
<keyword id="KW-0456">Lyase</keyword>
<keyword id="KW-0663">Pyridoxal phosphate</keyword>
<keyword id="KW-1185">Reference proteome</keyword>
<keyword id="KW-0704">Schiff base</keyword>
<protein>
    <recommendedName>
        <fullName evidence="1">Pyridoxal 5'-phosphate synthase subunit PdxS</fullName>
        <shortName evidence="1">PLP synthase subunit PdxS</shortName>
        <ecNumber evidence="1">4.3.3.6</ecNumber>
    </recommendedName>
    <alternativeName>
        <fullName evidence="1">Pdx1</fullName>
    </alternativeName>
</protein>
<evidence type="ECO:0000255" key="1">
    <source>
        <dbReference type="HAMAP-Rule" id="MF_01824"/>
    </source>
</evidence>
<evidence type="ECO:0000256" key="2">
    <source>
        <dbReference type="SAM" id="MobiDB-lite"/>
    </source>
</evidence>
<organism>
    <name type="scientific">Halorubrum lacusprofundi (strain ATCC 49239 / DSM 5036 / JCM 8891 / ACAM 34)</name>
    <dbReference type="NCBI Taxonomy" id="416348"/>
    <lineage>
        <taxon>Archaea</taxon>
        <taxon>Methanobacteriati</taxon>
        <taxon>Methanobacteriota</taxon>
        <taxon>Stenosarchaea group</taxon>
        <taxon>Halobacteria</taxon>
        <taxon>Halobacteriales</taxon>
        <taxon>Haloferacaceae</taxon>
        <taxon>Halorubrum</taxon>
    </lineage>
</organism>
<proteinExistence type="inferred from homology"/>
<sequence length="302" mass="32644">MPEATDLEELKRGTDLVKRGFARMQKGGVIMDVVTREQARIAEDTGAVAVMALEAVPADIRKRGGVARMPDPENVTEIIDEVSIPVMGKSRIGHRKEAEILESLGVDMIDESEVLTPADDEYHTDKRDFASPFVCGARDLPEALRRIREGAAMIRTKGEAGTGDVNQAVKHQRTIKTQIRTLTGLNHEEREKWAREHGAPRDLVHETAEAGRLPVVNFAAGGIATPADAALMMYHGCDGIFVGSGIFGAEDPEAMGTAIVEAVNNWDDPDELADIASGIGKGMKGQSNEDLPDEEKLQGRGV</sequence>
<comment type="function">
    <text evidence="1">Catalyzes the formation of pyridoxal 5'-phosphate from ribose 5-phosphate (RBP), glyceraldehyde 3-phosphate (G3P) and ammonia. The ammonia is provided by the PdxT subunit. Can also use ribulose 5-phosphate and dihydroxyacetone phosphate as substrates, resulting from enzyme-catalyzed isomerization of RBP and G3P, respectively.</text>
</comment>
<comment type="catalytic activity">
    <reaction evidence="1">
        <text>aldehydo-D-ribose 5-phosphate + D-glyceraldehyde 3-phosphate + L-glutamine = pyridoxal 5'-phosphate + L-glutamate + phosphate + 3 H2O + H(+)</text>
        <dbReference type="Rhea" id="RHEA:31507"/>
        <dbReference type="ChEBI" id="CHEBI:15377"/>
        <dbReference type="ChEBI" id="CHEBI:15378"/>
        <dbReference type="ChEBI" id="CHEBI:29985"/>
        <dbReference type="ChEBI" id="CHEBI:43474"/>
        <dbReference type="ChEBI" id="CHEBI:58273"/>
        <dbReference type="ChEBI" id="CHEBI:58359"/>
        <dbReference type="ChEBI" id="CHEBI:59776"/>
        <dbReference type="ChEBI" id="CHEBI:597326"/>
        <dbReference type="EC" id="4.3.3.6"/>
    </reaction>
</comment>
<comment type="pathway">
    <text evidence="1">Cofactor biosynthesis; pyridoxal 5'-phosphate biosynthesis.</text>
</comment>
<comment type="subunit">
    <text evidence="1">In the presence of PdxT, forms a dodecamer of heterodimers.</text>
</comment>
<comment type="similarity">
    <text evidence="1">Belongs to the PdxS/SNZ family.</text>
</comment>
<name>PDXS_HALLT</name>